<keyword id="KW-0488">Methylation</keyword>
<keyword id="KW-1185">Reference proteome</keyword>
<keyword id="KW-0687">Ribonucleoprotein</keyword>
<keyword id="KW-0689">Ribosomal protein</keyword>
<keyword id="KW-0694">RNA-binding</keyword>
<keyword id="KW-0699">rRNA-binding</keyword>
<keyword id="KW-0820">tRNA-binding</keyword>
<accession>B7JUP8</accession>
<feature type="chain" id="PRO_1000194151" description="Small ribosomal subunit protein uS12">
    <location>
        <begin position="1"/>
        <end position="125"/>
    </location>
</feature>
<feature type="region of interest" description="Disordered" evidence="3">
    <location>
        <begin position="9"/>
        <end position="28"/>
    </location>
</feature>
<feature type="region of interest" description="Disordered" evidence="3">
    <location>
        <begin position="104"/>
        <end position="125"/>
    </location>
</feature>
<feature type="compositionally biased region" description="Basic residues" evidence="3">
    <location>
        <begin position="113"/>
        <end position="125"/>
    </location>
</feature>
<feature type="modified residue" description="3-methylthioaspartic acid" evidence="1">
    <location>
        <position position="89"/>
    </location>
</feature>
<dbReference type="EMBL" id="CP001287">
    <property type="protein sequence ID" value="ACK65592.1"/>
    <property type="molecule type" value="Genomic_DNA"/>
</dbReference>
<dbReference type="RefSeq" id="WP_012594865.1">
    <property type="nucleotide sequence ID" value="NC_011726.1"/>
</dbReference>
<dbReference type="SMR" id="B7JUP8"/>
<dbReference type="STRING" id="41431.PCC8801_1539"/>
<dbReference type="KEGG" id="cyp:PCC8801_1539"/>
<dbReference type="eggNOG" id="COG0048">
    <property type="taxonomic scope" value="Bacteria"/>
</dbReference>
<dbReference type="HOGENOM" id="CLU_104295_1_2_3"/>
<dbReference type="OrthoDB" id="9802366at2"/>
<dbReference type="Proteomes" id="UP000008204">
    <property type="component" value="Chromosome"/>
</dbReference>
<dbReference type="GO" id="GO:0015935">
    <property type="term" value="C:small ribosomal subunit"/>
    <property type="evidence" value="ECO:0007669"/>
    <property type="project" value="InterPro"/>
</dbReference>
<dbReference type="GO" id="GO:0019843">
    <property type="term" value="F:rRNA binding"/>
    <property type="evidence" value="ECO:0007669"/>
    <property type="project" value="UniProtKB-UniRule"/>
</dbReference>
<dbReference type="GO" id="GO:0003735">
    <property type="term" value="F:structural constituent of ribosome"/>
    <property type="evidence" value="ECO:0007669"/>
    <property type="project" value="InterPro"/>
</dbReference>
<dbReference type="GO" id="GO:0000049">
    <property type="term" value="F:tRNA binding"/>
    <property type="evidence" value="ECO:0007669"/>
    <property type="project" value="UniProtKB-UniRule"/>
</dbReference>
<dbReference type="GO" id="GO:0006412">
    <property type="term" value="P:translation"/>
    <property type="evidence" value="ECO:0007669"/>
    <property type="project" value="UniProtKB-UniRule"/>
</dbReference>
<dbReference type="CDD" id="cd03368">
    <property type="entry name" value="Ribosomal_S12"/>
    <property type="match status" value="1"/>
</dbReference>
<dbReference type="FunFam" id="2.40.50.140:FF:000001">
    <property type="entry name" value="30S ribosomal protein S12"/>
    <property type="match status" value="1"/>
</dbReference>
<dbReference type="Gene3D" id="2.40.50.140">
    <property type="entry name" value="Nucleic acid-binding proteins"/>
    <property type="match status" value="1"/>
</dbReference>
<dbReference type="HAMAP" id="MF_00403_B">
    <property type="entry name" value="Ribosomal_uS12_B"/>
    <property type="match status" value="1"/>
</dbReference>
<dbReference type="InterPro" id="IPR012340">
    <property type="entry name" value="NA-bd_OB-fold"/>
</dbReference>
<dbReference type="InterPro" id="IPR006032">
    <property type="entry name" value="Ribosomal_uS12"/>
</dbReference>
<dbReference type="InterPro" id="IPR005679">
    <property type="entry name" value="Ribosomal_uS12_bac"/>
</dbReference>
<dbReference type="NCBIfam" id="TIGR00981">
    <property type="entry name" value="rpsL_bact"/>
    <property type="match status" value="1"/>
</dbReference>
<dbReference type="PANTHER" id="PTHR11652">
    <property type="entry name" value="30S RIBOSOMAL PROTEIN S12 FAMILY MEMBER"/>
    <property type="match status" value="1"/>
</dbReference>
<dbReference type="Pfam" id="PF00164">
    <property type="entry name" value="Ribosom_S12_S23"/>
    <property type="match status" value="1"/>
</dbReference>
<dbReference type="PIRSF" id="PIRSF002133">
    <property type="entry name" value="Ribosomal_S12/S23"/>
    <property type="match status" value="1"/>
</dbReference>
<dbReference type="PRINTS" id="PR01034">
    <property type="entry name" value="RIBOSOMALS12"/>
</dbReference>
<dbReference type="SUPFAM" id="SSF50249">
    <property type="entry name" value="Nucleic acid-binding proteins"/>
    <property type="match status" value="1"/>
</dbReference>
<dbReference type="PROSITE" id="PS00055">
    <property type="entry name" value="RIBOSOMAL_S12"/>
    <property type="match status" value="1"/>
</dbReference>
<reference key="1">
    <citation type="journal article" date="2011" name="MBio">
        <title>Novel metabolic attributes of the genus Cyanothece, comprising a group of unicellular nitrogen-fixing Cyanobacteria.</title>
        <authorList>
            <person name="Bandyopadhyay A."/>
            <person name="Elvitigala T."/>
            <person name="Welsh E."/>
            <person name="Stockel J."/>
            <person name="Liberton M."/>
            <person name="Min H."/>
            <person name="Sherman L.A."/>
            <person name="Pakrasi H.B."/>
        </authorList>
    </citation>
    <scope>NUCLEOTIDE SEQUENCE [LARGE SCALE GENOMIC DNA]</scope>
    <source>
        <strain>PCC 8801 / RF-1</strain>
    </source>
</reference>
<comment type="function">
    <text evidence="2">With S4 and S5 plays an important role in translational accuracy.</text>
</comment>
<comment type="function">
    <text evidence="2">Interacts with and stabilizes bases of the 16S rRNA that are involved in tRNA selection in the A site and with the mRNA backbone. Located at the interface of the 30S and 50S subunits, it traverses the body of the 30S subunit contacting proteins on the other side and probably holding the rRNA structure together. The combined cluster of proteins S8, S12 and S17 appears to hold together the shoulder and platform of the 30S subunit.</text>
</comment>
<comment type="subunit">
    <text evidence="2">Part of the 30S ribosomal subunit. Contacts proteins S8 and S17. May interact with IF1 in the 30S initiation complex.</text>
</comment>
<comment type="similarity">
    <text evidence="2">Belongs to the universal ribosomal protein uS12 family.</text>
</comment>
<protein>
    <recommendedName>
        <fullName evidence="2">Small ribosomal subunit protein uS12</fullName>
    </recommendedName>
    <alternativeName>
        <fullName evidence="4">30S ribosomal protein S12</fullName>
    </alternativeName>
</protein>
<name>RS12_RIPO1</name>
<organism>
    <name type="scientific">Rippkaea orientalis (strain PCC 8801 / RF-1)</name>
    <name type="common">Cyanothece sp. (strain PCC 8801)</name>
    <dbReference type="NCBI Taxonomy" id="41431"/>
    <lineage>
        <taxon>Bacteria</taxon>
        <taxon>Bacillati</taxon>
        <taxon>Cyanobacteriota</taxon>
        <taxon>Cyanophyceae</taxon>
        <taxon>Oscillatoriophycideae</taxon>
        <taxon>Chroococcales</taxon>
        <taxon>Aphanothecaceae</taxon>
        <taxon>Rippkaea</taxon>
        <taxon>Rippkaea orientalis</taxon>
    </lineage>
</organism>
<evidence type="ECO:0000250" key="1"/>
<evidence type="ECO:0000255" key="2">
    <source>
        <dbReference type="HAMAP-Rule" id="MF_00403"/>
    </source>
</evidence>
<evidence type="ECO:0000256" key="3">
    <source>
        <dbReference type="SAM" id="MobiDB-lite"/>
    </source>
</evidence>
<evidence type="ECO:0000305" key="4"/>
<sequence>MPTIQQLIRSERSKLKKKTKSPALKQCPQRRGVCTRVYTTTPKKPNSALRKVARVRLTSGFEVTAYIPGIGHNLQEHSVVLIRGGRVKDLPGVRYHIIRGTLDAQGVKDRKQGRSKYGTKRPKKA</sequence>
<proteinExistence type="inferred from homology"/>
<gene>
    <name evidence="2" type="primary">rpsL</name>
    <name evidence="2" type="synonym">rps12</name>
    <name type="ordered locus">PCC8801_1539</name>
</gene>